<keyword id="KW-0021">Allosteric enzyme</keyword>
<keyword id="KW-0035">Amyloplast</keyword>
<keyword id="KW-0067">ATP-binding</keyword>
<keyword id="KW-0150">Chloroplast</keyword>
<keyword id="KW-0547">Nucleotide-binding</keyword>
<keyword id="KW-0548">Nucleotidyltransferase</keyword>
<keyword id="KW-0934">Plastid</keyword>
<keyword id="KW-1185">Reference proteome</keyword>
<keyword id="KW-0750">Starch biosynthesis</keyword>
<keyword id="KW-0808">Transferase</keyword>
<comment type="function">
    <text>This protein plays a role in synthesis of starch. It catalyzes the synthesis of the activated glycosyl donor, ADP-glucose from Glc-1-P and ATP.</text>
</comment>
<comment type="catalytic activity">
    <reaction>
        <text>alpha-D-glucose 1-phosphate + ATP + H(+) = ADP-alpha-D-glucose + diphosphate</text>
        <dbReference type="Rhea" id="RHEA:12120"/>
        <dbReference type="ChEBI" id="CHEBI:15378"/>
        <dbReference type="ChEBI" id="CHEBI:30616"/>
        <dbReference type="ChEBI" id="CHEBI:33019"/>
        <dbReference type="ChEBI" id="CHEBI:57498"/>
        <dbReference type="ChEBI" id="CHEBI:58601"/>
        <dbReference type="EC" id="2.7.7.27"/>
    </reaction>
</comment>
<comment type="activity regulation">
    <text>Insensitive to 3'phosphoglycerate and orthophosphate.</text>
</comment>
<comment type="pathway">
    <text>Glycan biosynthesis; starch biosynthesis.</text>
</comment>
<comment type="subunit">
    <text>Heterotetramer.</text>
</comment>
<comment type="subcellular location">
    <subcellularLocation>
        <location>Plastid</location>
        <location>Chloroplast</location>
    </subcellularLocation>
    <subcellularLocation>
        <location>Plastid</location>
        <location>Amyloplast</location>
    </subcellularLocation>
    <text>Found in the chloroplast in leaf. Found in the plastid in the developing endosperm.</text>
</comment>
<comment type="similarity">
    <text evidence="1">Belongs to the bacterial/plant glucose-1-phosphate adenylyltransferase family.</text>
</comment>
<reference key="1">
    <citation type="journal article" date="1989" name="Plant Mol. Biol.">
        <title>Isolation and nucleotide sequences of cDNA clones encoding ADP-glucose pyrophosphorylase polypeptides from wheat leaf and endosperm.</title>
        <authorList>
            <person name="Olive M.R."/>
            <person name="Ellis R.J."/>
            <person name="Schuch W.W."/>
        </authorList>
    </citation>
    <scope>NUCLEOTIDE SEQUENCE [MRNA]</scope>
    <source>
        <strain>cv. Mardler</strain>
        <tissue>Leaf</tissue>
    </source>
</reference>
<proteinExistence type="evidence at transcript level"/>
<accession>P12298</accession>
<dbReference type="EC" id="2.7.7.27"/>
<dbReference type="EMBL" id="X14348">
    <property type="protein sequence ID" value="CAA32531.1"/>
    <property type="molecule type" value="mRNA"/>
</dbReference>
<dbReference type="PIR" id="S05079">
    <property type="entry name" value="S05079"/>
</dbReference>
<dbReference type="SMR" id="P12298"/>
<dbReference type="STRING" id="4565.P12298"/>
<dbReference type="PaxDb" id="4565-Traes_5BL_3212A5875.1"/>
<dbReference type="eggNOG" id="KOG1322">
    <property type="taxonomic scope" value="Eukaryota"/>
</dbReference>
<dbReference type="UniPathway" id="UPA00152"/>
<dbReference type="Proteomes" id="UP000019116">
    <property type="component" value="Unplaced"/>
</dbReference>
<dbReference type="ExpressionAtlas" id="P12298">
    <property type="expression patterns" value="baseline and differential"/>
</dbReference>
<dbReference type="GO" id="GO:0009501">
    <property type="term" value="C:amyloplast"/>
    <property type="evidence" value="ECO:0007669"/>
    <property type="project" value="UniProtKB-SubCell"/>
</dbReference>
<dbReference type="GO" id="GO:0009507">
    <property type="term" value="C:chloroplast"/>
    <property type="evidence" value="ECO:0007669"/>
    <property type="project" value="UniProtKB-SubCell"/>
</dbReference>
<dbReference type="GO" id="GO:0005524">
    <property type="term" value="F:ATP binding"/>
    <property type="evidence" value="ECO:0007669"/>
    <property type="project" value="UniProtKB-KW"/>
</dbReference>
<dbReference type="GO" id="GO:0008878">
    <property type="term" value="F:glucose-1-phosphate adenylyltransferase activity"/>
    <property type="evidence" value="ECO:0007669"/>
    <property type="project" value="UniProtKB-EC"/>
</dbReference>
<dbReference type="GO" id="GO:0005978">
    <property type="term" value="P:glycogen biosynthetic process"/>
    <property type="evidence" value="ECO:0007669"/>
    <property type="project" value="InterPro"/>
</dbReference>
<dbReference type="GO" id="GO:0019252">
    <property type="term" value="P:starch biosynthetic process"/>
    <property type="evidence" value="ECO:0007669"/>
    <property type="project" value="UniProtKB-UniPathway"/>
</dbReference>
<dbReference type="CDD" id="cd04651">
    <property type="entry name" value="LbH_G1P_AT_C"/>
    <property type="match status" value="1"/>
</dbReference>
<dbReference type="Gene3D" id="2.160.10.10">
    <property type="entry name" value="Hexapeptide repeat proteins"/>
    <property type="match status" value="1"/>
</dbReference>
<dbReference type="Gene3D" id="3.90.550.10">
    <property type="entry name" value="Spore Coat Polysaccharide Biosynthesis Protein SpsA, Chain A"/>
    <property type="match status" value="1"/>
</dbReference>
<dbReference type="InterPro" id="IPR011831">
    <property type="entry name" value="ADP-Glc_PPase"/>
</dbReference>
<dbReference type="InterPro" id="IPR005836">
    <property type="entry name" value="ADP_Glu_pyroP_CS"/>
</dbReference>
<dbReference type="InterPro" id="IPR005835">
    <property type="entry name" value="NTP_transferase_dom"/>
</dbReference>
<dbReference type="InterPro" id="IPR029044">
    <property type="entry name" value="Nucleotide-diphossugar_trans"/>
</dbReference>
<dbReference type="InterPro" id="IPR011004">
    <property type="entry name" value="Trimer_LpxA-like_sf"/>
</dbReference>
<dbReference type="PANTHER" id="PTHR43523:SF12">
    <property type="entry name" value="GLUCOSE-1-PHOSPHATE ADENYLYLTRANSFERASE LARGE SUBUNIT 1, CHLOROPLASTIC-RELATED"/>
    <property type="match status" value="1"/>
</dbReference>
<dbReference type="PANTHER" id="PTHR43523">
    <property type="entry name" value="GLUCOSE-1-PHOSPHATE ADENYLYLTRANSFERASE-RELATED"/>
    <property type="match status" value="1"/>
</dbReference>
<dbReference type="Pfam" id="PF25247">
    <property type="entry name" value="LbH_GLGC"/>
    <property type="match status" value="1"/>
</dbReference>
<dbReference type="Pfam" id="PF00483">
    <property type="entry name" value="NTP_transferase"/>
    <property type="match status" value="1"/>
</dbReference>
<dbReference type="SUPFAM" id="SSF53448">
    <property type="entry name" value="Nucleotide-diphospho-sugar transferases"/>
    <property type="match status" value="1"/>
</dbReference>
<dbReference type="SUPFAM" id="SSF51161">
    <property type="entry name" value="Trimeric LpxA-like enzymes"/>
    <property type="match status" value="1"/>
</dbReference>
<dbReference type="PROSITE" id="PS00810">
    <property type="entry name" value="ADP_GLC_PYROPHOSPH_3"/>
    <property type="match status" value="1"/>
</dbReference>
<name>GLGL1_WHEAT</name>
<feature type="chain" id="PRO_0000195359" description="Glucose-1-phosphate adenylyltransferase large subunit">
    <location>
        <begin position="1" status="less than"/>
        <end position="301"/>
    </location>
</feature>
<feature type="non-terminal residue">
    <location>
        <position position="1"/>
    </location>
</feature>
<evidence type="ECO:0000305" key="1"/>
<organism>
    <name type="scientific">Triticum aestivum</name>
    <name type="common">Wheat</name>
    <dbReference type="NCBI Taxonomy" id="4565"/>
    <lineage>
        <taxon>Eukaryota</taxon>
        <taxon>Viridiplantae</taxon>
        <taxon>Streptophyta</taxon>
        <taxon>Embryophyta</taxon>
        <taxon>Tracheophyta</taxon>
        <taxon>Spermatophyta</taxon>
        <taxon>Magnoliopsida</taxon>
        <taxon>Liliopsida</taxon>
        <taxon>Poales</taxon>
        <taxon>Poaceae</taxon>
        <taxon>BOP clade</taxon>
        <taxon>Pooideae</taxon>
        <taxon>Triticodae</taxon>
        <taxon>Triticeae</taxon>
        <taxon>Triticinae</taxon>
        <taxon>Triticum</taxon>
    </lineage>
</organism>
<protein>
    <recommendedName>
        <fullName>Glucose-1-phosphate adenylyltransferase large subunit</fullName>
        <ecNumber>2.7.7.27</ecNumber>
    </recommendedName>
    <alternativeName>
        <fullName>ADP-glucose pyrophosphorylase</fullName>
    </alternativeName>
    <alternativeName>
        <fullName>ADP-glucose synthase</fullName>
    </alternativeName>
    <alternativeName>
        <fullName>AGPase S</fullName>
    </alternativeName>
    <alternativeName>
        <fullName>Alpha-D-glucose-1-phosphate adenyl transferase</fullName>
    </alternativeName>
</protein>
<sequence>GVLILSGDHLYRMDYMDFVQSHRQRDAGISICCLPIDGSRASDFGLMKIDDTGRVISFSEKPRGADLKEMEEAEKKPYIASMGVYIFKKEILLNLLRWRFPTANDFGSEIIPAAAREINVKAYLFNDYWEDIGTIKSFFEANLALAEQPSKFSFYDASKPMYTSRRNLPPSMISGSKITDSIISHGCFLDKCRVEHSVVGIRSRIGSNVHLKDTVMLGADFYETDMERGDQLAEGKVPIGIGENTSIQNCIIDKNARIGKNVTIANAEGVQEADRASEGFHIRSGITVVLKNSVIADGLVI</sequence>
<gene>
    <name type="primary">AGA.1</name>
</gene>